<organism>
    <name type="scientific">Echis ocellatus</name>
    <name type="common">Ocellated saw-scaled viper</name>
    <dbReference type="NCBI Taxonomy" id="99586"/>
    <lineage>
        <taxon>Eukaryota</taxon>
        <taxon>Metazoa</taxon>
        <taxon>Chordata</taxon>
        <taxon>Craniata</taxon>
        <taxon>Vertebrata</taxon>
        <taxon>Euteleostomi</taxon>
        <taxon>Lepidosauria</taxon>
        <taxon>Squamata</taxon>
        <taxon>Bifurcata</taxon>
        <taxon>Unidentata</taxon>
        <taxon>Episquamata</taxon>
        <taxon>Toxicofera</taxon>
        <taxon>Serpentes</taxon>
        <taxon>Colubroidea</taxon>
        <taxon>Viperidae</taxon>
        <taxon>Viperinae</taxon>
        <taxon>Echis</taxon>
    </lineage>
</organism>
<keyword id="KW-1217">Cell adhesion impairing toxin</keyword>
<keyword id="KW-0903">Direct protein sequencing</keyword>
<keyword id="KW-1015">Disulfide bond</keyword>
<keyword id="KW-1199">Hemostasis impairing toxin</keyword>
<keyword id="KW-1201">Platelet aggregation inhibiting toxin</keyword>
<keyword id="KW-0964">Secreted</keyword>
<keyword id="KW-0800">Toxin</keyword>
<proteinExistence type="evidence at protein level"/>
<name>DID5B_ECHOC</name>
<dbReference type="SMR" id="P0C6A4"/>
<dbReference type="GO" id="GO:0005576">
    <property type="term" value="C:extracellular region"/>
    <property type="evidence" value="ECO:0007669"/>
    <property type="project" value="UniProtKB-SubCell"/>
</dbReference>
<dbReference type="GO" id="GO:0090729">
    <property type="term" value="F:toxin activity"/>
    <property type="evidence" value="ECO:0007669"/>
    <property type="project" value="UniProtKB-KW"/>
</dbReference>
<dbReference type="Gene3D" id="4.10.70.10">
    <property type="entry name" value="Disintegrin domain"/>
    <property type="match status" value="1"/>
</dbReference>
<dbReference type="InterPro" id="IPR018358">
    <property type="entry name" value="Disintegrin_CS"/>
</dbReference>
<dbReference type="InterPro" id="IPR001762">
    <property type="entry name" value="Disintegrin_dom"/>
</dbReference>
<dbReference type="InterPro" id="IPR036436">
    <property type="entry name" value="Disintegrin_dom_sf"/>
</dbReference>
<dbReference type="PANTHER" id="PTHR11905">
    <property type="entry name" value="ADAM A DISINTEGRIN AND METALLOPROTEASE DOMAIN"/>
    <property type="match status" value="1"/>
</dbReference>
<dbReference type="PANTHER" id="PTHR11905:SF159">
    <property type="entry name" value="ADAM METALLOPROTEASE"/>
    <property type="match status" value="1"/>
</dbReference>
<dbReference type="Pfam" id="PF00200">
    <property type="entry name" value="Disintegrin"/>
    <property type="match status" value="1"/>
</dbReference>
<dbReference type="PRINTS" id="PR00289">
    <property type="entry name" value="DISINTEGRIN"/>
</dbReference>
<dbReference type="SMART" id="SM00050">
    <property type="entry name" value="DISIN"/>
    <property type="match status" value="1"/>
</dbReference>
<dbReference type="SUPFAM" id="SSF57552">
    <property type="entry name" value="Blood coagulation inhibitor (disintegrin)"/>
    <property type="match status" value="1"/>
</dbReference>
<dbReference type="PROSITE" id="PS00427">
    <property type="entry name" value="DISINTEGRIN_1"/>
    <property type="match status" value="1"/>
</dbReference>
<dbReference type="PROSITE" id="PS50214">
    <property type="entry name" value="DISINTEGRIN_2"/>
    <property type="match status" value="1"/>
</dbReference>
<sequence>NSAHPCCDPVTCQPKKGEHCISGPCCRNCKFLNSGTVCKRAVGDDMDDYCSGITTDCPRNPYKGKD</sequence>
<feature type="chain" id="PRO_0000319019" description="Disintegrin EO5B">
    <location>
        <begin position="1"/>
        <end position="66"/>
    </location>
</feature>
<feature type="domain" description="Disintegrin" evidence="1">
    <location>
        <begin position="1"/>
        <end position="65"/>
    </location>
</feature>
<feature type="short sequence motif" description="Cell attachment site; atypical (VGD)">
    <location>
        <begin position="42"/>
        <end position="44"/>
    </location>
</feature>
<feature type="disulfide bond" evidence="1">
    <location>
        <begin position="6"/>
        <end position="29"/>
    </location>
</feature>
<feature type="disulfide bond" description="Interchain (with C-54 in EO5A)" evidence="1">
    <location>
        <position position="7"/>
    </location>
</feature>
<feature type="disulfide bond" description="Interchain (with C-59 in EO5A)" evidence="1">
    <location>
        <position position="12"/>
    </location>
</feature>
<feature type="disulfide bond" evidence="1">
    <location>
        <begin position="20"/>
        <end position="26"/>
    </location>
</feature>
<feature type="disulfide bond" evidence="1">
    <location>
        <begin position="25"/>
        <end position="50"/>
    </location>
</feature>
<feature type="disulfide bond" evidence="1">
    <location>
        <begin position="38"/>
        <end position="57"/>
    </location>
</feature>
<comment type="function">
    <text evidence="2">Poor inhibitor of platelet aggregation. When it dimerizes with EO4A, it inhibits the adhesion of cells expressing the RGD-dependent integrin alpha-5/beta-1 (ITGA5/ITGB1) to immobilized fibronectin. When it dimerizes with EO5A, it inhibits the adhesion of the alpha-4/beta-1 (ITGA4/ITGB1) integrin to VCAM-1. When it dimerizes either with EO4A or EO5A, the inhibition on alpha-IIb/beta-3 (ITGA2B/ITGB3) is low.</text>
</comment>
<comment type="subunit">
    <text evidence="2">Heterodimer with EO4A or EO5A; disulfide-linked.</text>
</comment>
<comment type="subcellular location">
    <subcellularLocation>
        <location evidence="2">Secreted</location>
    </subcellularLocation>
</comment>
<comment type="tissue specificity">
    <text>Expressed by the venom gland.</text>
</comment>
<comment type="miscellaneous">
    <text evidence="4">When it dimerizes either with EO4A or EO5A, there is no inhibition on alpha-1/beta-1 (ITGA1/ITGB1), alpha-2/beta-1 (ITGA2/ITGB1) and alpha-6/beta-1 (ITGA6/ITGB1).</text>
</comment>
<comment type="similarity">
    <text evidence="3">Belongs to the disintegrin family. Dimeric disintegrin subfamily.</text>
</comment>
<evidence type="ECO:0000255" key="1">
    <source>
        <dbReference type="PROSITE-ProRule" id="PRU00068"/>
    </source>
</evidence>
<evidence type="ECO:0000269" key="2">
    <source>
    </source>
</evidence>
<evidence type="ECO:0000305" key="3"/>
<evidence type="ECO:0000305" key="4">
    <source>
    </source>
</evidence>
<reference key="1">
    <citation type="journal article" date="2003" name="Biochem. J.">
        <title>Snake venom disintegrins: novel dimeric disintegrins and structural diversification by disulphide bond engineering.</title>
        <authorList>
            <person name="Calvete J.J."/>
            <person name="Moreno-Murciano M.P."/>
            <person name="Theakston R.D.G."/>
            <person name="Kisiel D.G."/>
            <person name="Marcinkiewicz C."/>
        </authorList>
    </citation>
    <scope>PROTEIN SEQUENCE</scope>
    <scope>FUNCTION</scope>
    <scope>SUBUNIT</scope>
    <scope>SUBCELLULAR LOCATION</scope>
    <source>
        <tissue>Venom</tissue>
    </source>
</reference>
<accession>P0C6A4</accession>
<protein>
    <recommendedName>
        <fullName>Disintegrin EO5B</fullName>
    </recommendedName>
    <alternativeName>
        <fullName>EO4B</fullName>
    </alternativeName>
</protein>